<name>RL35_LISMC</name>
<evidence type="ECO:0000255" key="1">
    <source>
        <dbReference type="HAMAP-Rule" id="MF_00514"/>
    </source>
</evidence>
<evidence type="ECO:0000256" key="2">
    <source>
        <dbReference type="SAM" id="MobiDB-lite"/>
    </source>
</evidence>
<evidence type="ECO:0000305" key="3"/>
<keyword id="KW-0687">Ribonucleoprotein</keyword>
<keyword id="KW-0689">Ribosomal protein</keyword>
<proteinExistence type="inferred from homology"/>
<accession>C1KW83</accession>
<organism>
    <name type="scientific">Listeria monocytogenes serotype 4b (strain CLIP80459)</name>
    <dbReference type="NCBI Taxonomy" id="568819"/>
    <lineage>
        <taxon>Bacteria</taxon>
        <taxon>Bacillati</taxon>
        <taxon>Bacillota</taxon>
        <taxon>Bacilli</taxon>
        <taxon>Bacillales</taxon>
        <taxon>Listeriaceae</taxon>
        <taxon>Listeria</taxon>
    </lineage>
</organism>
<feature type="chain" id="PRO_1000211708" description="Large ribosomal subunit protein bL35">
    <location>
        <begin position="1"/>
        <end position="66"/>
    </location>
</feature>
<feature type="region of interest" description="Disordered" evidence="2">
    <location>
        <begin position="1"/>
        <end position="50"/>
    </location>
</feature>
<feature type="compositionally biased region" description="Basic residues" evidence="2">
    <location>
        <begin position="1"/>
        <end position="28"/>
    </location>
</feature>
<sequence length="66" mass="7720">MPKMKTHRGSAKRFKRTGSGKLKRRHGFTSHMFANKSQKQKRKLRKSAMVSAGDFKRIRQMVAKMK</sequence>
<protein>
    <recommendedName>
        <fullName evidence="1">Large ribosomal subunit protein bL35</fullName>
    </recommendedName>
    <alternativeName>
        <fullName evidence="3">50S ribosomal protein L35</fullName>
    </alternativeName>
</protein>
<dbReference type="EMBL" id="FM242711">
    <property type="protein sequence ID" value="CAS05558.1"/>
    <property type="molecule type" value="Genomic_DNA"/>
</dbReference>
<dbReference type="RefSeq" id="WP_003720098.1">
    <property type="nucleotide sequence ID" value="NC_012488.1"/>
</dbReference>
<dbReference type="SMR" id="C1KW83"/>
<dbReference type="GeneID" id="93239693"/>
<dbReference type="KEGG" id="lmc:Lm4b_01800"/>
<dbReference type="HOGENOM" id="CLU_169643_3_0_9"/>
<dbReference type="GO" id="GO:0022625">
    <property type="term" value="C:cytosolic large ribosomal subunit"/>
    <property type="evidence" value="ECO:0007669"/>
    <property type="project" value="TreeGrafter"/>
</dbReference>
<dbReference type="GO" id="GO:0003735">
    <property type="term" value="F:structural constituent of ribosome"/>
    <property type="evidence" value="ECO:0007669"/>
    <property type="project" value="InterPro"/>
</dbReference>
<dbReference type="GO" id="GO:0006412">
    <property type="term" value="P:translation"/>
    <property type="evidence" value="ECO:0007669"/>
    <property type="project" value="UniProtKB-UniRule"/>
</dbReference>
<dbReference type="FunFam" id="4.10.410.60:FF:000001">
    <property type="entry name" value="50S ribosomal protein L35"/>
    <property type="match status" value="1"/>
</dbReference>
<dbReference type="Gene3D" id="4.10.410.60">
    <property type="match status" value="1"/>
</dbReference>
<dbReference type="HAMAP" id="MF_00514">
    <property type="entry name" value="Ribosomal_bL35"/>
    <property type="match status" value="1"/>
</dbReference>
<dbReference type="InterPro" id="IPR001706">
    <property type="entry name" value="Ribosomal_bL35"/>
</dbReference>
<dbReference type="InterPro" id="IPR021137">
    <property type="entry name" value="Ribosomal_bL35-like"/>
</dbReference>
<dbReference type="InterPro" id="IPR018265">
    <property type="entry name" value="Ribosomal_bL35_CS"/>
</dbReference>
<dbReference type="InterPro" id="IPR037229">
    <property type="entry name" value="Ribosomal_bL35_sf"/>
</dbReference>
<dbReference type="NCBIfam" id="TIGR00001">
    <property type="entry name" value="rpmI_bact"/>
    <property type="match status" value="1"/>
</dbReference>
<dbReference type="PANTHER" id="PTHR33343">
    <property type="entry name" value="54S RIBOSOMAL PROTEIN BL35M"/>
    <property type="match status" value="1"/>
</dbReference>
<dbReference type="PANTHER" id="PTHR33343:SF1">
    <property type="entry name" value="LARGE RIBOSOMAL SUBUNIT PROTEIN BL35M"/>
    <property type="match status" value="1"/>
</dbReference>
<dbReference type="Pfam" id="PF01632">
    <property type="entry name" value="Ribosomal_L35p"/>
    <property type="match status" value="1"/>
</dbReference>
<dbReference type="PRINTS" id="PR00064">
    <property type="entry name" value="RIBOSOMALL35"/>
</dbReference>
<dbReference type="SUPFAM" id="SSF143034">
    <property type="entry name" value="L35p-like"/>
    <property type="match status" value="1"/>
</dbReference>
<dbReference type="PROSITE" id="PS00936">
    <property type="entry name" value="RIBOSOMAL_L35"/>
    <property type="match status" value="1"/>
</dbReference>
<reference key="1">
    <citation type="journal article" date="2012" name="BMC Genomics">
        <title>Comparative genomics and transcriptomics of lineages I, II, and III strains of Listeria monocytogenes.</title>
        <authorList>
            <person name="Hain T."/>
            <person name="Ghai R."/>
            <person name="Billion A."/>
            <person name="Kuenne C.T."/>
            <person name="Steinweg C."/>
            <person name="Izar B."/>
            <person name="Mohamed W."/>
            <person name="Mraheil M."/>
            <person name="Domann E."/>
            <person name="Schaffrath S."/>
            <person name="Karst U."/>
            <person name="Goesmann A."/>
            <person name="Oehm S."/>
            <person name="Puhler A."/>
            <person name="Merkl R."/>
            <person name="Vorwerk S."/>
            <person name="Glaser P."/>
            <person name="Garrido P."/>
            <person name="Rusniok C."/>
            <person name="Buchrieser C."/>
            <person name="Goebel W."/>
            <person name="Chakraborty T."/>
        </authorList>
    </citation>
    <scope>NUCLEOTIDE SEQUENCE [LARGE SCALE GENOMIC DNA]</scope>
    <source>
        <strain>CLIP80459</strain>
    </source>
</reference>
<comment type="similarity">
    <text evidence="1">Belongs to the bacterial ribosomal protein bL35 family.</text>
</comment>
<gene>
    <name evidence="1" type="primary">rpmI</name>
    <name type="ordered locus">Lm4b_01800</name>
</gene>